<organism>
    <name type="scientific">Staphylococcus aureus (strain Mu50 / ATCC 700699)</name>
    <dbReference type="NCBI Taxonomy" id="158878"/>
    <lineage>
        <taxon>Bacteria</taxon>
        <taxon>Bacillati</taxon>
        <taxon>Bacillota</taxon>
        <taxon>Bacilli</taxon>
        <taxon>Bacillales</taxon>
        <taxon>Staphylococcaceae</taxon>
        <taxon>Staphylococcus</taxon>
    </lineage>
</organism>
<keyword id="KW-0963">Cytoplasm</keyword>
<keyword id="KW-0521">NADP</keyword>
<keyword id="KW-0560">Oxidoreductase</keyword>
<keyword id="KW-0671">Queuosine biosynthesis</keyword>
<proteinExistence type="inferred from homology"/>
<reference key="1">
    <citation type="journal article" date="2001" name="Lancet">
        <title>Whole genome sequencing of meticillin-resistant Staphylococcus aureus.</title>
        <authorList>
            <person name="Kuroda M."/>
            <person name="Ohta T."/>
            <person name="Uchiyama I."/>
            <person name="Baba T."/>
            <person name="Yuzawa H."/>
            <person name="Kobayashi I."/>
            <person name="Cui L."/>
            <person name="Oguchi A."/>
            <person name="Aoki K."/>
            <person name="Nagai Y."/>
            <person name="Lian J.-Q."/>
            <person name="Ito T."/>
            <person name="Kanamori M."/>
            <person name="Matsumaru H."/>
            <person name="Maruyama A."/>
            <person name="Murakami H."/>
            <person name="Hosoyama A."/>
            <person name="Mizutani-Ui Y."/>
            <person name="Takahashi N.K."/>
            <person name="Sawano T."/>
            <person name="Inoue R."/>
            <person name="Kaito C."/>
            <person name="Sekimizu K."/>
            <person name="Hirakawa H."/>
            <person name="Kuhara S."/>
            <person name="Goto S."/>
            <person name="Yabuzaki J."/>
            <person name="Kanehisa M."/>
            <person name="Yamashita A."/>
            <person name="Oshima K."/>
            <person name="Furuya K."/>
            <person name="Yoshino C."/>
            <person name="Shiba T."/>
            <person name="Hattori M."/>
            <person name="Ogasawara N."/>
            <person name="Hayashi H."/>
            <person name="Hiramatsu K."/>
        </authorList>
    </citation>
    <scope>NUCLEOTIDE SEQUENCE [LARGE SCALE GENOMIC DNA]</scope>
    <source>
        <strain>Mu50 / ATCC 700699</strain>
    </source>
</reference>
<accession>Q99VP5</accession>
<evidence type="ECO:0000255" key="1">
    <source>
        <dbReference type="HAMAP-Rule" id="MF_00818"/>
    </source>
</evidence>
<gene>
    <name evidence="1" type="primary">queF</name>
    <name type="ordered locus">SAV0728</name>
</gene>
<protein>
    <recommendedName>
        <fullName evidence="1">NADPH-dependent 7-cyano-7-deazaguanine reductase</fullName>
        <ecNumber evidence="1">1.7.1.13</ecNumber>
    </recommendedName>
    <alternativeName>
        <fullName evidence="1">7-cyano-7-carbaguanine reductase</fullName>
    </alternativeName>
    <alternativeName>
        <fullName evidence="1">NADPH-dependent nitrile oxidoreductase</fullName>
    </alternativeName>
    <alternativeName>
        <fullName evidence="1">PreQ(0) reductase</fullName>
    </alternativeName>
</protein>
<feature type="chain" id="PRO_0000162997" description="NADPH-dependent 7-cyano-7-deazaguanine reductase">
    <location>
        <begin position="1"/>
        <end position="166"/>
    </location>
</feature>
<feature type="active site" description="Thioimide intermediate" evidence="1">
    <location>
        <position position="57"/>
    </location>
</feature>
<feature type="active site" description="Proton donor" evidence="1">
    <location>
        <position position="64"/>
    </location>
</feature>
<feature type="binding site" evidence="1">
    <location>
        <begin position="79"/>
        <end position="81"/>
    </location>
    <ligand>
        <name>substrate</name>
    </ligand>
</feature>
<feature type="binding site" evidence="1">
    <location>
        <begin position="98"/>
        <end position="99"/>
    </location>
    <ligand>
        <name>substrate</name>
    </ligand>
</feature>
<sequence>MAHGRQQDELQDITLLGNQDNTYNFDYRPDVLESFDNKHQGRDYFVKFNCPEFTSLCPITGQPDFATIYISYIPNVKMVESKSLKLYLFSFRNHGDFHEDCMNIIMNDLIELMDPHYIEVWGKFTPRGGISIDPYTNYGRPNSKYEKMAEHRLMNHDLYPEKIDNR</sequence>
<name>QUEF_STAAM</name>
<comment type="function">
    <text evidence="1">Catalyzes the NADPH-dependent reduction of 7-cyano-7-deazaguanine (preQ0) to 7-aminomethyl-7-deazaguanine (preQ1).</text>
</comment>
<comment type="catalytic activity">
    <reaction evidence="1">
        <text>7-aminomethyl-7-carbaguanine + 2 NADP(+) = 7-cyano-7-deazaguanine + 2 NADPH + 3 H(+)</text>
        <dbReference type="Rhea" id="RHEA:13409"/>
        <dbReference type="ChEBI" id="CHEBI:15378"/>
        <dbReference type="ChEBI" id="CHEBI:45075"/>
        <dbReference type="ChEBI" id="CHEBI:57783"/>
        <dbReference type="ChEBI" id="CHEBI:58349"/>
        <dbReference type="ChEBI" id="CHEBI:58703"/>
        <dbReference type="EC" id="1.7.1.13"/>
    </reaction>
</comment>
<comment type="pathway">
    <text evidence="1">tRNA modification; tRNA-queuosine biosynthesis.</text>
</comment>
<comment type="subcellular location">
    <subcellularLocation>
        <location evidence="1">Cytoplasm</location>
    </subcellularLocation>
</comment>
<comment type="similarity">
    <text evidence="1">Belongs to the GTP cyclohydrolase I family. QueF type 1 subfamily.</text>
</comment>
<dbReference type="EC" id="1.7.1.13" evidence="1"/>
<dbReference type="EMBL" id="BA000017">
    <property type="protein sequence ID" value="BAB56890.1"/>
    <property type="molecule type" value="Genomic_DNA"/>
</dbReference>
<dbReference type="RefSeq" id="WP_000930014.1">
    <property type="nucleotide sequence ID" value="NC_002758.2"/>
</dbReference>
<dbReference type="SMR" id="Q99VP5"/>
<dbReference type="KEGG" id="sav:SAV0728"/>
<dbReference type="HOGENOM" id="CLU_102489_0_1_9"/>
<dbReference type="PhylomeDB" id="Q99VP5"/>
<dbReference type="UniPathway" id="UPA00392"/>
<dbReference type="Proteomes" id="UP000002481">
    <property type="component" value="Chromosome"/>
</dbReference>
<dbReference type="GO" id="GO:0005737">
    <property type="term" value="C:cytoplasm"/>
    <property type="evidence" value="ECO:0007669"/>
    <property type="project" value="UniProtKB-SubCell"/>
</dbReference>
<dbReference type="GO" id="GO:0033739">
    <property type="term" value="F:preQ1 synthase activity"/>
    <property type="evidence" value="ECO:0007669"/>
    <property type="project" value="UniProtKB-UniRule"/>
</dbReference>
<dbReference type="GO" id="GO:0008616">
    <property type="term" value="P:queuosine biosynthetic process"/>
    <property type="evidence" value="ECO:0007669"/>
    <property type="project" value="UniProtKB-UniRule"/>
</dbReference>
<dbReference type="GO" id="GO:0006400">
    <property type="term" value="P:tRNA modification"/>
    <property type="evidence" value="ECO:0007669"/>
    <property type="project" value="UniProtKB-UniRule"/>
</dbReference>
<dbReference type="Gene3D" id="3.30.1130.10">
    <property type="match status" value="1"/>
</dbReference>
<dbReference type="HAMAP" id="MF_00818">
    <property type="entry name" value="QueF_type1"/>
    <property type="match status" value="1"/>
</dbReference>
<dbReference type="InterPro" id="IPR043133">
    <property type="entry name" value="GTP-CH-I_C/QueF"/>
</dbReference>
<dbReference type="InterPro" id="IPR050084">
    <property type="entry name" value="NADPH_dep_7-cyano-7-deazaG_red"/>
</dbReference>
<dbReference type="InterPro" id="IPR029500">
    <property type="entry name" value="QueF"/>
</dbReference>
<dbReference type="InterPro" id="IPR016856">
    <property type="entry name" value="QueF_type1"/>
</dbReference>
<dbReference type="NCBIfam" id="TIGR03139">
    <property type="entry name" value="QueF-II"/>
    <property type="match status" value="1"/>
</dbReference>
<dbReference type="PANTHER" id="PTHR34354">
    <property type="entry name" value="NADPH-DEPENDENT 7-CYANO-7-DEAZAGUANINE REDUCTASE"/>
    <property type="match status" value="1"/>
</dbReference>
<dbReference type="PANTHER" id="PTHR34354:SF1">
    <property type="entry name" value="NADPH-DEPENDENT 7-CYANO-7-DEAZAGUANINE REDUCTASE"/>
    <property type="match status" value="1"/>
</dbReference>
<dbReference type="Pfam" id="PF14489">
    <property type="entry name" value="QueF"/>
    <property type="match status" value="1"/>
</dbReference>
<dbReference type="PIRSF" id="PIRSF027377">
    <property type="entry name" value="Nitrile_oxidored_QueF"/>
    <property type="match status" value="1"/>
</dbReference>
<dbReference type="SUPFAM" id="SSF55620">
    <property type="entry name" value="Tetrahydrobiopterin biosynthesis enzymes-like"/>
    <property type="match status" value="1"/>
</dbReference>